<proteinExistence type="evidence at protein level"/>
<name>UC06_MAIZE</name>
<protein>
    <recommendedName>
        <fullName>Unknown protein from spot 1131 of 2D-PAGE of etiolated coleoptile</fullName>
    </recommendedName>
</protein>
<reference key="1">
    <citation type="journal article" date="1996" name="Theor. Appl. Genet.">
        <title>The maize two dimensional gel protein database: towards an integrated genome analysis program.</title>
        <authorList>
            <person name="Touzet P."/>
            <person name="Riccardi F."/>
            <person name="Morin C."/>
            <person name="Damerval C."/>
            <person name="Huet J.-C."/>
            <person name="Pernollet J.-C."/>
            <person name="Zivy M."/>
            <person name="de Vienne D."/>
        </authorList>
        <dbReference type="AGRICOLA" id="IND20551642"/>
    </citation>
    <scope>PROTEIN SEQUENCE</scope>
    <source>
        <tissue>Coleoptile</tissue>
    </source>
</reference>
<keyword id="KW-0903">Direct protein sequencing</keyword>
<keyword id="KW-1185">Reference proteome</keyword>
<comment type="miscellaneous">
    <text>On the 2D-gel the determined pI of this unknown protein is: 6.8, its MW is: 71.0 kDa.</text>
</comment>
<dbReference type="MaizeGDB" id="123930"/>
<dbReference type="InParanoid" id="P80612"/>
<dbReference type="Proteomes" id="UP000007305">
    <property type="component" value="Unplaced"/>
</dbReference>
<sequence length="15" mass="1391">AAAAPPRRGPSGPDA</sequence>
<accession>P80612</accession>
<feature type="chain" id="PRO_0000055504" description="Unknown protein from spot 1131 of 2D-PAGE of etiolated coleoptile">
    <location>
        <begin position="1" status="less than"/>
        <end position="15" status="greater than"/>
    </location>
</feature>
<feature type="non-terminal residue">
    <location>
        <position position="1"/>
    </location>
</feature>
<feature type="non-terminal residue">
    <location>
        <position position="15"/>
    </location>
</feature>
<organism>
    <name type="scientific">Zea mays</name>
    <name type="common">Maize</name>
    <dbReference type="NCBI Taxonomy" id="4577"/>
    <lineage>
        <taxon>Eukaryota</taxon>
        <taxon>Viridiplantae</taxon>
        <taxon>Streptophyta</taxon>
        <taxon>Embryophyta</taxon>
        <taxon>Tracheophyta</taxon>
        <taxon>Spermatophyta</taxon>
        <taxon>Magnoliopsida</taxon>
        <taxon>Liliopsida</taxon>
        <taxon>Poales</taxon>
        <taxon>Poaceae</taxon>
        <taxon>PACMAD clade</taxon>
        <taxon>Panicoideae</taxon>
        <taxon>Andropogonodae</taxon>
        <taxon>Andropogoneae</taxon>
        <taxon>Tripsacinae</taxon>
        <taxon>Zea</taxon>
    </lineage>
</organism>